<keyword id="KW-0378">Hydrolase</keyword>
<keyword id="KW-0479">Metal-binding</keyword>
<keyword id="KW-0665">Pyrimidine biosynthesis</keyword>
<keyword id="KW-1185">Reference proteome</keyword>
<keyword id="KW-0862">Zinc</keyword>
<organism>
    <name type="scientific">Neisseria meningitidis serogroup B (strain ATCC BAA-335 / MC58)</name>
    <dbReference type="NCBI Taxonomy" id="122586"/>
    <lineage>
        <taxon>Bacteria</taxon>
        <taxon>Pseudomonadati</taxon>
        <taxon>Pseudomonadota</taxon>
        <taxon>Betaproteobacteria</taxon>
        <taxon>Neisseriales</taxon>
        <taxon>Neisseriaceae</taxon>
        <taxon>Neisseria</taxon>
    </lineage>
</organism>
<protein>
    <recommendedName>
        <fullName evidence="1">Dihydroorotase</fullName>
        <shortName evidence="1">DHOase</shortName>
        <ecNumber evidence="1">3.5.2.3</ecNumber>
    </recommendedName>
</protein>
<accession>Q9K0D1</accession>
<proteinExistence type="inferred from homology"/>
<feature type="chain" id="PRO_0000147211" description="Dihydroorotase">
    <location>
        <begin position="1"/>
        <end position="344"/>
    </location>
</feature>
<feature type="active site" evidence="1">
    <location>
        <position position="247"/>
    </location>
</feature>
<feature type="binding site" evidence="1">
    <location>
        <position position="13"/>
    </location>
    <ligand>
        <name>Zn(2+)</name>
        <dbReference type="ChEBI" id="CHEBI:29105"/>
        <label>1</label>
    </ligand>
</feature>
<feature type="binding site" evidence="1">
    <location>
        <begin position="15"/>
        <end position="17"/>
    </location>
    <ligand>
        <name>substrate</name>
    </ligand>
</feature>
<feature type="binding site" evidence="1">
    <location>
        <position position="15"/>
    </location>
    <ligand>
        <name>Zn(2+)</name>
        <dbReference type="ChEBI" id="CHEBI:29105"/>
        <label>1</label>
    </ligand>
</feature>
<feature type="binding site" evidence="1">
    <location>
        <position position="41"/>
    </location>
    <ligand>
        <name>substrate</name>
    </ligand>
</feature>
<feature type="binding site" description="via carbamate group" evidence="1">
    <location>
        <position position="98"/>
    </location>
    <ligand>
        <name>Zn(2+)</name>
        <dbReference type="ChEBI" id="CHEBI:29105"/>
        <label>1</label>
    </ligand>
</feature>
<feature type="binding site" description="via carbamate group" evidence="1">
    <location>
        <position position="98"/>
    </location>
    <ligand>
        <name>Zn(2+)</name>
        <dbReference type="ChEBI" id="CHEBI:29105"/>
        <label>2</label>
    </ligand>
</feature>
<feature type="binding site" evidence="1">
    <location>
        <position position="135"/>
    </location>
    <ligand>
        <name>substrate</name>
    </ligand>
</feature>
<feature type="binding site" evidence="1">
    <location>
        <position position="135"/>
    </location>
    <ligand>
        <name>Zn(2+)</name>
        <dbReference type="ChEBI" id="CHEBI:29105"/>
        <label>2</label>
    </ligand>
</feature>
<feature type="binding site" evidence="1">
    <location>
        <position position="173"/>
    </location>
    <ligand>
        <name>Zn(2+)</name>
        <dbReference type="ChEBI" id="CHEBI:29105"/>
        <label>2</label>
    </ligand>
</feature>
<feature type="binding site" evidence="1">
    <location>
        <position position="218"/>
    </location>
    <ligand>
        <name>substrate</name>
    </ligand>
</feature>
<feature type="binding site" evidence="1">
    <location>
        <position position="247"/>
    </location>
    <ligand>
        <name>Zn(2+)</name>
        <dbReference type="ChEBI" id="CHEBI:29105"/>
        <label>1</label>
    </ligand>
</feature>
<feature type="binding site" evidence="1">
    <location>
        <position position="251"/>
    </location>
    <ligand>
        <name>substrate</name>
    </ligand>
</feature>
<feature type="binding site" evidence="1">
    <location>
        <position position="263"/>
    </location>
    <ligand>
        <name>substrate</name>
    </ligand>
</feature>
<feature type="modified residue" description="N6-carboxylysine" evidence="1">
    <location>
        <position position="98"/>
    </location>
</feature>
<reference key="1">
    <citation type="journal article" date="2000" name="Science">
        <title>Complete genome sequence of Neisseria meningitidis serogroup B strain MC58.</title>
        <authorList>
            <person name="Tettelin H."/>
            <person name="Saunders N.J."/>
            <person name="Heidelberg J.F."/>
            <person name="Jeffries A.C."/>
            <person name="Nelson K.E."/>
            <person name="Eisen J.A."/>
            <person name="Ketchum K.A."/>
            <person name="Hood D.W."/>
            <person name="Peden J.F."/>
            <person name="Dodson R.J."/>
            <person name="Nelson W.C."/>
            <person name="Gwinn M.L."/>
            <person name="DeBoy R.T."/>
            <person name="Peterson J.D."/>
            <person name="Hickey E.K."/>
            <person name="Haft D.H."/>
            <person name="Salzberg S.L."/>
            <person name="White O."/>
            <person name="Fleischmann R.D."/>
            <person name="Dougherty B.A."/>
            <person name="Mason T.M."/>
            <person name="Ciecko A."/>
            <person name="Parksey D.S."/>
            <person name="Blair E."/>
            <person name="Cittone H."/>
            <person name="Clark E.B."/>
            <person name="Cotton M.D."/>
            <person name="Utterback T.R."/>
            <person name="Khouri H.M."/>
            <person name="Qin H."/>
            <person name="Vamathevan J.J."/>
            <person name="Gill J."/>
            <person name="Scarlato V."/>
            <person name="Masignani V."/>
            <person name="Pizza M."/>
            <person name="Grandi G."/>
            <person name="Sun L."/>
            <person name="Smith H.O."/>
            <person name="Fraser C.M."/>
            <person name="Moxon E.R."/>
            <person name="Rappuoli R."/>
            <person name="Venter J.C."/>
        </authorList>
    </citation>
    <scope>NUCLEOTIDE SEQUENCE [LARGE SCALE GENOMIC DNA]</scope>
    <source>
        <strain>ATCC BAA-335 / MC58</strain>
    </source>
</reference>
<sequence length="344" mass="37084">MQTLTIIRPDDMHLHLRDGDALKAVAPYTARQMGRAVIMPNLKPPVVSVADALAYKARIMAALPEGSAFEPLMTLYLTDNATPELVREAKAAGIVAFKLYPAGATTNSDSGVTDLFKLIPVLEEMAKQGILFLVHGEVTDPEIDIFDREAAFIGRVMKPVLAQVPNLKVVFEHITTAEAARLVLEAGDNVAATVTPQHLLLNRNDLLVGGVRPHHFCLPVLKRETHRQALVAAVTGEKAHKFFLGTDSAPHAKSAKENACGCAGMFSAMTAIELYAEVFEKAGALDKLEAFASKNGARFYGIPENTDTITLVKQSQTVPASVPYGDGELVPMRAGGEIGWTVQY</sequence>
<name>PYRC_NEIMB</name>
<evidence type="ECO:0000255" key="1">
    <source>
        <dbReference type="HAMAP-Rule" id="MF_00219"/>
    </source>
</evidence>
<dbReference type="EC" id="3.5.2.3" evidence="1"/>
<dbReference type="EMBL" id="AE002098">
    <property type="protein sequence ID" value="AAF41100.1"/>
    <property type="molecule type" value="Genomic_DNA"/>
</dbReference>
<dbReference type="PIR" id="H81171">
    <property type="entry name" value="H81171"/>
</dbReference>
<dbReference type="RefSeq" id="NP_273724.1">
    <property type="nucleotide sequence ID" value="NC_003112.2"/>
</dbReference>
<dbReference type="RefSeq" id="WP_002222782.1">
    <property type="nucleotide sequence ID" value="NC_003112.2"/>
</dbReference>
<dbReference type="SMR" id="Q9K0D1"/>
<dbReference type="FunCoup" id="Q9K0D1">
    <property type="interactions" value="403"/>
</dbReference>
<dbReference type="STRING" id="122586.NMB0682"/>
<dbReference type="MEROPS" id="M38.A02"/>
<dbReference type="PaxDb" id="122586-NMB0682"/>
<dbReference type="KEGG" id="nme:NMB0682"/>
<dbReference type="PATRIC" id="fig|122586.8.peg.855"/>
<dbReference type="HOGENOM" id="CLU_041558_1_0_4"/>
<dbReference type="InParanoid" id="Q9K0D1"/>
<dbReference type="OrthoDB" id="9808095at2"/>
<dbReference type="UniPathway" id="UPA00070">
    <property type="reaction ID" value="UER00117"/>
</dbReference>
<dbReference type="Proteomes" id="UP000000425">
    <property type="component" value="Chromosome"/>
</dbReference>
<dbReference type="GO" id="GO:0005737">
    <property type="term" value="C:cytoplasm"/>
    <property type="evidence" value="ECO:0000318"/>
    <property type="project" value="GO_Central"/>
</dbReference>
<dbReference type="GO" id="GO:0004151">
    <property type="term" value="F:dihydroorotase activity"/>
    <property type="evidence" value="ECO:0000318"/>
    <property type="project" value="GO_Central"/>
</dbReference>
<dbReference type="GO" id="GO:0008270">
    <property type="term" value="F:zinc ion binding"/>
    <property type="evidence" value="ECO:0007669"/>
    <property type="project" value="UniProtKB-UniRule"/>
</dbReference>
<dbReference type="GO" id="GO:0006207">
    <property type="term" value="P:'de novo' pyrimidine nucleobase biosynthetic process"/>
    <property type="evidence" value="ECO:0000318"/>
    <property type="project" value="GO_Central"/>
</dbReference>
<dbReference type="GO" id="GO:0044205">
    <property type="term" value="P:'de novo' UMP biosynthetic process"/>
    <property type="evidence" value="ECO:0007669"/>
    <property type="project" value="UniProtKB-UniRule"/>
</dbReference>
<dbReference type="GO" id="GO:0006221">
    <property type="term" value="P:pyrimidine nucleotide biosynthetic process"/>
    <property type="evidence" value="ECO:0000318"/>
    <property type="project" value="GO_Central"/>
</dbReference>
<dbReference type="CDD" id="cd01294">
    <property type="entry name" value="DHOase"/>
    <property type="match status" value="1"/>
</dbReference>
<dbReference type="FunFam" id="3.20.20.140:FF:000006">
    <property type="entry name" value="Dihydroorotase"/>
    <property type="match status" value="1"/>
</dbReference>
<dbReference type="Gene3D" id="3.20.20.140">
    <property type="entry name" value="Metal-dependent hydrolases"/>
    <property type="match status" value="1"/>
</dbReference>
<dbReference type="HAMAP" id="MF_00219">
    <property type="entry name" value="PyrC_classII"/>
    <property type="match status" value="1"/>
</dbReference>
<dbReference type="InterPro" id="IPR006680">
    <property type="entry name" value="Amidohydro-rel"/>
</dbReference>
<dbReference type="InterPro" id="IPR004721">
    <property type="entry name" value="DHOdimr"/>
</dbReference>
<dbReference type="InterPro" id="IPR002195">
    <property type="entry name" value="Dihydroorotase_CS"/>
</dbReference>
<dbReference type="InterPro" id="IPR032466">
    <property type="entry name" value="Metal_Hydrolase"/>
</dbReference>
<dbReference type="NCBIfam" id="TIGR00856">
    <property type="entry name" value="pyrC_dimer"/>
    <property type="match status" value="1"/>
</dbReference>
<dbReference type="PANTHER" id="PTHR43137">
    <property type="entry name" value="DIHYDROOROTASE"/>
    <property type="match status" value="1"/>
</dbReference>
<dbReference type="PANTHER" id="PTHR43137:SF1">
    <property type="entry name" value="DIHYDROOROTASE"/>
    <property type="match status" value="1"/>
</dbReference>
<dbReference type="Pfam" id="PF01979">
    <property type="entry name" value="Amidohydro_1"/>
    <property type="match status" value="1"/>
</dbReference>
<dbReference type="PIRSF" id="PIRSF001237">
    <property type="entry name" value="DHOdimr"/>
    <property type="match status" value="1"/>
</dbReference>
<dbReference type="SUPFAM" id="SSF51556">
    <property type="entry name" value="Metallo-dependent hydrolases"/>
    <property type="match status" value="1"/>
</dbReference>
<dbReference type="PROSITE" id="PS00482">
    <property type="entry name" value="DIHYDROOROTASE_1"/>
    <property type="match status" value="1"/>
</dbReference>
<dbReference type="PROSITE" id="PS00483">
    <property type="entry name" value="DIHYDROOROTASE_2"/>
    <property type="match status" value="1"/>
</dbReference>
<comment type="function">
    <text evidence="1">Catalyzes the reversible cyclization of carbamoyl aspartate to dihydroorotate.</text>
</comment>
<comment type="catalytic activity">
    <reaction evidence="1">
        <text>(S)-dihydroorotate + H2O = N-carbamoyl-L-aspartate + H(+)</text>
        <dbReference type="Rhea" id="RHEA:24296"/>
        <dbReference type="ChEBI" id="CHEBI:15377"/>
        <dbReference type="ChEBI" id="CHEBI:15378"/>
        <dbReference type="ChEBI" id="CHEBI:30864"/>
        <dbReference type="ChEBI" id="CHEBI:32814"/>
        <dbReference type="EC" id="3.5.2.3"/>
    </reaction>
</comment>
<comment type="cofactor">
    <cofactor evidence="1">
        <name>Zn(2+)</name>
        <dbReference type="ChEBI" id="CHEBI:29105"/>
    </cofactor>
    <text evidence="1">Binds 2 Zn(2+) ions per subunit.</text>
</comment>
<comment type="pathway">
    <text evidence="1">Pyrimidine metabolism; UMP biosynthesis via de novo pathway; (S)-dihydroorotate from bicarbonate: step 3/3.</text>
</comment>
<comment type="subunit">
    <text evidence="1">Homodimer.</text>
</comment>
<comment type="similarity">
    <text evidence="1">Belongs to the metallo-dependent hydrolases superfamily. DHOase family. Class II DHOase subfamily.</text>
</comment>
<gene>
    <name evidence="1" type="primary">pyrC</name>
    <name type="ordered locus">NMB0682</name>
</gene>